<organism>
    <name type="scientific">Buchnera aphidicola subsp. Cinara cedri (strain Cc)</name>
    <dbReference type="NCBI Taxonomy" id="372461"/>
    <lineage>
        <taxon>Bacteria</taxon>
        <taxon>Pseudomonadati</taxon>
        <taxon>Pseudomonadota</taxon>
        <taxon>Gammaproteobacteria</taxon>
        <taxon>Enterobacterales</taxon>
        <taxon>Erwiniaceae</taxon>
        <taxon>Buchnera</taxon>
    </lineage>
</organism>
<keyword id="KW-0028">Amino-acid biosynthesis</keyword>
<keyword id="KW-0100">Branched-chain amino acid biosynthesis</keyword>
<keyword id="KW-0963">Cytoplasm</keyword>
<keyword id="KW-0432">Leucine biosynthesis</keyword>
<keyword id="KW-0460">Magnesium</keyword>
<keyword id="KW-0464">Manganese</keyword>
<keyword id="KW-0479">Metal-binding</keyword>
<keyword id="KW-0520">NAD</keyword>
<keyword id="KW-0560">Oxidoreductase</keyword>
<keyword id="KW-0614">Plasmid</keyword>
<keyword id="KW-1185">Reference proteome</keyword>
<proteinExistence type="inferred from homology"/>
<accession>Q5WPZ9</accession>
<evidence type="ECO:0000250" key="1"/>
<evidence type="ECO:0000305" key="2"/>
<sequence>MKKKKEYRIAVLPGDGIGPEVMQEAYKILNVINKKFDFNIYTNEYDIGGIAIDKYGAPLPKKTLNGCIESHAILFGSIGGKEWTHLPADEQPERGGLLPLRKFFNLFVNLRPIKLHFSLKKLSPLKKEIIQDGFDILCVRELIGGIYFGLPKGKNTFDKKNISAFDTEIYSTKEIEKIADIAFQLSLKRKKKVFSIDKANVLESSMLWREVVIQVSKRYPNVELIHLYIDNAAMQLIKNPNQFDVILCSNLFGDILSDECAALTGSLGMLPSASLNESFFGLFEPAGGSAPDLKGKNIANPIAQILSLALLFKYSLQLEKISHLIELSVLKTLEKGYRTLDISNGKKYITTDQMGNYIAKTLSELIN</sequence>
<feature type="chain" id="PRO_0000274189" description="3-isopropylmalate dehydrogenase">
    <location>
        <begin position="1"/>
        <end position="367"/>
    </location>
</feature>
<feature type="binding site" evidence="1">
    <location>
        <begin position="80"/>
        <end position="93"/>
    </location>
    <ligand>
        <name>NAD(+)</name>
        <dbReference type="ChEBI" id="CHEBI:57540"/>
    </ligand>
</feature>
<feature type="binding site" evidence="1">
    <location>
        <position position="101"/>
    </location>
    <ligand>
        <name>substrate</name>
    </ligand>
</feature>
<feature type="binding site" evidence="1">
    <location>
        <position position="111"/>
    </location>
    <ligand>
        <name>substrate</name>
    </ligand>
</feature>
<feature type="binding site" evidence="1">
    <location>
        <position position="140"/>
    </location>
    <ligand>
        <name>substrate</name>
    </ligand>
</feature>
<feature type="binding site" evidence="1">
    <location>
        <position position="230"/>
    </location>
    <ligand>
        <name>Mg(2+)</name>
        <dbReference type="ChEBI" id="CHEBI:18420"/>
    </ligand>
</feature>
<feature type="binding site" evidence="1">
    <location>
        <position position="230"/>
    </location>
    <ligand>
        <name>substrate</name>
    </ligand>
</feature>
<feature type="binding site" evidence="1">
    <location>
        <position position="254"/>
    </location>
    <ligand>
        <name>Mg(2+)</name>
        <dbReference type="ChEBI" id="CHEBI:18420"/>
    </ligand>
</feature>
<feature type="binding site" evidence="1">
    <location>
        <position position="258"/>
    </location>
    <ligand>
        <name>Mg(2+)</name>
        <dbReference type="ChEBI" id="CHEBI:18420"/>
    </ligand>
</feature>
<feature type="binding site" evidence="1">
    <location>
        <begin position="288"/>
        <end position="300"/>
    </location>
    <ligand>
        <name>NAD(+)</name>
        <dbReference type="ChEBI" id="CHEBI:57540"/>
    </ligand>
</feature>
<feature type="site" description="Important for catalysis" evidence="1">
    <location>
        <position position="147"/>
    </location>
</feature>
<feature type="site" description="Important for catalysis" evidence="1">
    <location>
        <position position="198"/>
    </location>
</feature>
<name>LEU3_BUCCC</name>
<gene>
    <name type="primary">leuB</name>
    <name type="ordered locus">BCc_PL3</name>
</gene>
<reference key="1">
    <citation type="journal article" date="2006" name="Gene">
        <title>Plasmids in the aphid endosymbiont Buchnera aphidicola with the smallest genomes. A puzzling evolutionary story.</title>
        <authorList>
            <person name="Gil R."/>
            <person name="Sabater-Munoz B."/>
            <person name="Perez-Brocal V."/>
            <person name="Silva F.J."/>
            <person name="Latorre A."/>
        </authorList>
    </citation>
    <scope>NUCLEOTIDE SEQUENCE [LARGE SCALE GENOMIC DNA]</scope>
    <source>
        <strain>Cc</strain>
    </source>
</reference>
<reference key="2">
    <citation type="journal article" date="2006" name="Science">
        <title>A small microbial genome: the end of a long symbiotic relationship?</title>
        <authorList>
            <person name="Perez-Brocal V."/>
            <person name="Gil R."/>
            <person name="Ramos S."/>
            <person name="Lamelas A."/>
            <person name="Postigo M."/>
            <person name="Michelena J.M."/>
            <person name="Silva F.J."/>
            <person name="Moya A."/>
            <person name="Latorre A."/>
        </authorList>
    </citation>
    <scope>NUCLEOTIDE SEQUENCE [LARGE SCALE GENOMIC DNA]</scope>
    <source>
        <strain>Cc</strain>
    </source>
</reference>
<comment type="function">
    <text evidence="1">Catalyzes the oxidation of 3-carboxy-2-hydroxy-4-methylpentanoate (3-isopropylmalate) to 3-carboxy-4-methyl-2-oxopentanoate. The product decarboxylates to 4-methyl-2 oxopentanoate (By similarity).</text>
</comment>
<comment type="catalytic activity">
    <reaction>
        <text>(2R,3S)-3-isopropylmalate + NAD(+) = 4-methyl-2-oxopentanoate + CO2 + NADH</text>
        <dbReference type="Rhea" id="RHEA:32271"/>
        <dbReference type="ChEBI" id="CHEBI:16526"/>
        <dbReference type="ChEBI" id="CHEBI:17865"/>
        <dbReference type="ChEBI" id="CHEBI:35121"/>
        <dbReference type="ChEBI" id="CHEBI:57540"/>
        <dbReference type="ChEBI" id="CHEBI:57945"/>
        <dbReference type="EC" id="1.1.1.85"/>
    </reaction>
</comment>
<comment type="cofactor">
    <cofactor evidence="1">
        <name>Mg(2+)</name>
        <dbReference type="ChEBI" id="CHEBI:18420"/>
    </cofactor>
    <cofactor evidence="1">
        <name>Mn(2+)</name>
        <dbReference type="ChEBI" id="CHEBI:29035"/>
    </cofactor>
    <text evidence="1">Binds 1 Mg(2+) or Mn(2+) ion per subunit.</text>
</comment>
<comment type="pathway">
    <text>Amino-acid biosynthesis; L-leucine biosynthesis; L-leucine from 3-methyl-2-oxobutanoate: step 3/4.</text>
</comment>
<comment type="subunit">
    <text evidence="1">Homodimer.</text>
</comment>
<comment type="subcellular location">
    <subcellularLocation>
        <location evidence="1">Cytoplasm</location>
    </subcellularLocation>
</comment>
<comment type="similarity">
    <text evidence="2">Belongs to the isocitrate and isopropylmalate dehydrogenases family. LeuB type 1 subfamily.</text>
</comment>
<geneLocation type="plasmid">
    <name>pLeu-BCc</name>
</geneLocation>
<protein>
    <recommendedName>
        <fullName>3-isopropylmalate dehydrogenase</fullName>
        <ecNumber>1.1.1.85</ecNumber>
    </recommendedName>
    <alternativeName>
        <fullName>3-IPM-DH</fullName>
    </alternativeName>
    <alternativeName>
        <fullName>Beta-IPM dehydrogenase</fullName>
        <shortName>IMDH</shortName>
    </alternativeName>
</protein>
<dbReference type="EC" id="1.1.1.85"/>
<dbReference type="EMBL" id="AY438025">
    <property type="protein sequence ID" value="AAR99734.1"/>
    <property type="molecule type" value="Genomic_DNA"/>
</dbReference>
<dbReference type="RefSeq" id="WP_012622903.1">
    <property type="nucleotide sequence ID" value="NC_011878.1"/>
</dbReference>
<dbReference type="SMR" id="Q5WPZ9"/>
<dbReference type="KEGG" id="bcc:leuB"/>
<dbReference type="eggNOG" id="COG0473">
    <property type="taxonomic scope" value="Bacteria"/>
</dbReference>
<dbReference type="HOGENOM" id="CLU_031953_0_3_6"/>
<dbReference type="OrthoDB" id="9767905at2"/>
<dbReference type="UniPathway" id="UPA00048">
    <property type="reaction ID" value="UER00072"/>
</dbReference>
<dbReference type="Proteomes" id="UP000000669">
    <property type="component" value="Plasmid pLeu-BCc"/>
</dbReference>
<dbReference type="GO" id="GO:0005829">
    <property type="term" value="C:cytosol"/>
    <property type="evidence" value="ECO:0007669"/>
    <property type="project" value="TreeGrafter"/>
</dbReference>
<dbReference type="GO" id="GO:0003862">
    <property type="term" value="F:3-isopropylmalate dehydrogenase activity"/>
    <property type="evidence" value="ECO:0007669"/>
    <property type="project" value="UniProtKB-UniRule"/>
</dbReference>
<dbReference type="GO" id="GO:0000287">
    <property type="term" value="F:magnesium ion binding"/>
    <property type="evidence" value="ECO:0007669"/>
    <property type="project" value="InterPro"/>
</dbReference>
<dbReference type="GO" id="GO:0051287">
    <property type="term" value="F:NAD binding"/>
    <property type="evidence" value="ECO:0007669"/>
    <property type="project" value="InterPro"/>
</dbReference>
<dbReference type="GO" id="GO:0009098">
    <property type="term" value="P:L-leucine biosynthetic process"/>
    <property type="evidence" value="ECO:0007669"/>
    <property type="project" value="UniProtKB-UniRule"/>
</dbReference>
<dbReference type="FunFam" id="3.40.718.10:FF:000006">
    <property type="entry name" value="3-isopropylmalate dehydrogenase"/>
    <property type="match status" value="1"/>
</dbReference>
<dbReference type="Gene3D" id="3.40.718.10">
    <property type="entry name" value="Isopropylmalate Dehydrogenase"/>
    <property type="match status" value="1"/>
</dbReference>
<dbReference type="HAMAP" id="MF_01033">
    <property type="entry name" value="LeuB_type1"/>
    <property type="match status" value="1"/>
</dbReference>
<dbReference type="InterPro" id="IPR019818">
    <property type="entry name" value="IsoCit/isopropylmalate_DH_CS"/>
</dbReference>
<dbReference type="InterPro" id="IPR024084">
    <property type="entry name" value="IsoPropMal-DH-like_dom"/>
</dbReference>
<dbReference type="InterPro" id="IPR004429">
    <property type="entry name" value="Isopropylmalate_DH"/>
</dbReference>
<dbReference type="NCBIfam" id="TIGR00169">
    <property type="entry name" value="leuB"/>
    <property type="match status" value="1"/>
</dbReference>
<dbReference type="PANTHER" id="PTHR42979">
    <property type="entry name" value="3-ISOPROPYLMALATE DEHYDROGENASE"/>
    <property type="match status" value="1"/>
</dbReference>
<dbReference type="PANTHER" id="PTHR42979:SF1">
    <property type="entry name" value="3-ISOPROPYLMALATE DEHYDROGENASE"/>
    <property type="match status" value="1"/>
</dbReference>
<dbReference type="Pfam" id="PF00180">
    <property type="entry name" value="Iso_dh"/>
    <property type="match status" value="1"/>
</dbReference>
<dbReference type="SMART" id="SM01329">
    <property type="entry name" value="Iso_dh"/>
    <property type="match status" value="1"/>
</dbReference>
<dbReference type="SUPFAM" id="SSF53659">
    <property type="entry name" value="Isocitrate/Isopropylmalate dehydrogenase-like"/>
    <property type="match status" value="1"/>
</dbReference>
<dbReference type="PROSITE" id="PS00470">
    <property type="entry name" value="IDH_IMDH"/>
    <property type="match status" value="1"/>
</dbReference>